<comment type="function">
    <text evidence="1">Plays an important role in primary cilium assembly, maintenance, and length regulation. Interacts with centriole inner scaffold proteins to promote proper centriole size and integrity and assembly of functional cilia. Required for the recruitment of both the inner scaffold protein POC1B and the distal SFI1/CETN2 complex to centrioles.</text>
</comment>
<comment type="subunit">
    <text evidence="1">Interacts with POC5, POC1B, CETN2 and FAM161A.</text>
</comment>
<comment type="subcellular location">
    <subcellularLocation>
        <location evidence="1">Cytoplasm</location>
        <location evidence="1">Cytoskeleton</location>
        <location evidence="1">Microtubule organizing center</location>
        <location evidence="1">Centrosome</location>
    </subcellularLocation>
    <subcellularLocation>
        <location evidence="3">Cytoplasm</location>
        <location evidence="3">Cytoskeleton</location>
        <location evidence="3">Microtubule organizing center</location>
        <location evidence="3">Centrosome</location>
        <location evidence="3">Centriole</location>
    </subcellularLocation>
    <subcellularLocation>
        <location evidence="1">Cytoplasm</location>
        <location evidence="1">Cytoskeleton</location>
        <location evidence="1">Microtubule organizing center</location>
        <location evidence="1">Centrosome</location>
        <location evidence="1">Centriolar satellite</location>
    </subcellularLocation>
    <text evidence="3">Localizes to the inner scaffold structure of the central core region of centrioles.</text>
</comment>
<comment type="alternative products">
    <event type="alternative splicing"/>
    <isoform>
        <id>Q8C9M2-1</id>
        <name>1</name>
        <sequence type="displayed"/>
    </isoform>
    <isoform>
        <id>Q8C9M2-2</id>
        <name>2</name>
        <sequence type="described" ref="VSP_028797"/>
    </isoform>
    <isoform>
        <id>Q8C9M2-3</id>
        <name>3</name>
        <sequence type="described" ref="VSP_028797 VSP_028798 VSP_028799"/>
    </isoform>
    <isoform>
        <id>Q8C9M2-4</id>
        <name>4</name>
        <sequence type="described" ref="VSP_028798 VSP_028799"/>
    </isoform>
</comment>
<feature type="chain" id="PRO_0000307716" description="Coiled-coil domain-containing protein 15">
    <location>
        <begin position="1"/>
        <end position="810"/>
    </location>
</feature>
<feature type="coiled-coil region" evidence="2">
    <location>
        <begin position="65"/>
        <end position="89"/>
    </location>
</feature>
<feature type="coiled-coil region" evidence="2">
    <location>
        <begin position="160"/>
        <end position="189"/>
    </location>
</feature>
<feature type="coiled-coil region" evidence="2">
    <location>
        <begin position="638"/>
        <end position="669"/>
    </location>
</feature>
<feature type="splice variant" id="VSP_028797" description="In isoform 2 and isoform 3." evidence="5">
    <original>M</original>
    <variation>MLTSGQAFISQKSM</variation>
    <location>
        <position position="1"/>
    </location>
</feature>
<feature type="splice variant" id="VSP_028798" description="In isoform 3 and isoform 4." evidence="4 5">
    <original>LSQTMKQARHQLASFKT</original>
    <variation>VSTGTIYFLSSCFSSVL</variation>
    <location>
        <begin position="173"/>
        <end position="189"/>
    </location>
</feature>
<feature type="splice variant" id="VSP_028799" description="In isoform 3 and isoform 4." evidence="4 5">
    <location>
        <begin position="190"/>
        <end position="810"/>
    </location>
</feature>
<keyword id="KW-0025">Alternative splicing</keyword>
<keyword id="KW-0970">Cilium biogenesis/degradation</keyword>
<keyword id="KW-0175">Coiled coil</keyword>
<keyword id="KW-0963">Cytoplasm</keyword>
<keyword id="KW-0206">Cytoskeleton</keyword>
<keyword id="KW-1185">Reference proteome</keyword>
<sequence>MPGGMAPLKKPRNPTKLPLALNPTKSKDVLAVLAERNQAIIPVGAWVEPASPNWSGIPAHTSAYVVEEEIKEQQRRKQESLRHFQRQVRHRVNQRVKLRKKQQLHKSYKAAEKEGSIAMQYSDLAHLSSKRTSVFPSNLNAAVGRFRLPTSQVLGDAIEDGENQLFQQQAQALSQTMKQARHQLASFKTVSEKKTPVLPNGGRKGCPTQEGLGCGKISFVAVSEERDALFVSCQQDFLSEDKEKAFSKVQKVKFKNPLSVVIKEDERKQLHPHSLQAVLPEAQDYFVEVQSGLPESQSDVIDVQNVEPKASRIEPKTLGVEPDTQATGVECQTTEPEGQAVKTGIQDVPKVQTVELDGNTELEAQDFLPSHQAFLSRDTDCLPNCQYQDSLPKGHCVLPNYWNVLPKYQNQHFLPVDQEFLPRNQLALPKEQNHPLQCQKQDLLPREQFPLLLRHQDQREPHVLPKCQEHDVLSKAQNYLHNYQEQDLQLQNQEVNSKEPLSDITDGKGREIFSLDMFSKKPSTFMRRERGDEELPLDSPQCAPPQIQDQVFLREQSQQPSVRTAERWQEDLYLSGHECLPPRQRRDTCSRQQQVYEEYRSGLSTEQQALLAFQSGVDQEEDKKERQKQYLRHRRLFMDIEREQVKEQNRQRERKRRIEKIKKKKEQQRYAEEQRLLRMNCHEEPYSEEKISDVLAQLQLEEIKGAREKQQQREKEYIRYVEALRAQVQEKMKLYNITLPPLCCCGPDFWDAHPDTCANNCIFYKNYRAYNRALHSVINSSDISEGNATLRNAIRNFASAHRRTPKQSLH</sequence>
<organism>
    <name type="scientific">Mus musculus</name>
    <name type="common">Mouse</name>
    <dbReference type="NCBI Taxonomy" id="10090"/>
    <lineage>
        <taxon>Eukaryota</taxon>
        <taxon>Metazoa</taxon>
        <taxon>Chordata</taxon>
        <taxon>Craniata</taxon>
        <taxon>Vertebrata</taxon>
        <taxon>Euteleostomi</taxon>
        <taxon>Mammalia</taxon>
        <taxon>Eutheria</taxon>
        <taxon>Euarchontoglires</taxon>
        <taxon>Glires</taxon>
        <taxon>Rodentia</taxon>
        <taxon>Myomorpha</taxon>
        <taxon>Muroidea</taxon>
        <taxon>Muridae</taxon>
        <taxon>Murinae</taxon>
        <taxon>Mus</taxon>
        <taxon>Mus</taxon>
    </lineage>
</organism>
<protein>
    <recommendedName>
        <fullName>Coiled-coil domain-containing protein 15</fullName>
    </recommendedName>
</protein>
<reference key="1">
    <citation type="journal article" date="2005" name="Science">
        <title>The transcriptional landscape of the mammalian genome.</title>
        <authorList>
            <person name="Carninci P."/>
            <person name="Kasukawa T."/>
            <person name="Katayama S."/>
            <person name="Gough J."/>
            <person name="Frith M.C."/>
            <person name="Maeda N."/>
            <person name="Oyama R."/>
            <person name="Ravasi T."/>
            <person name="Lenhard B."/>
            <person name="Wells C."/>
            <person name="Kodzius R."/>
            <person name="Shimokawa K."/>
            <person name="Bajic V.B."/>
            <person name="Brenner S.E."/>
            <person name="Batalov S."/>
            <person name="Forrest A.R."/>
            <person name="Zavolan M."/>
            <person name="Davis M.J."/>
            <person name="Wilming L.G."/>
            <person name="Aidinis V."/>
            <person name="Allen J.E."/>
            <person name="Ambesi-Impiombato A."/>
            <person name="Apweiler R."/>
            <person name="Aturaliya R.N."/>
            <person name="Bailey T.L."/>
            <person name="Bansal M."/>
            <person name="Baxter L."/>
            <person name="Beisel K.W."/>
            <person name="Bersano T."/>
            <person name="Bono H."/>
            <person name="Chalk A.M."/>
            <person name="Chiu K.P."/>
            <person name="Choudhary V."/>
            <person name="Christoffels A."/>
            <person name="Clutterbuck D.R."/>
            <person name="Crowe M.L."/>
            <person name="Dalla E."/>
            <person name="Dalrymple B.P."/>
            <person name="de Bono B."/>
            <person name="Della Gatta G."/>
            <person name="di Bernardo D."/>
            <person name="Down T."/>
            <person name="Engstrom P."/>
            <person name="Fagiolini M."/>
            <person name="Faulkner G."/>
            <person name="Fletcher C.F."/>
            <person name="Fukushima T."/>
            <person name="Furuno M."/>
            <person name="Futaki S."/>
            <person name="Gariboldi M."/>
            <person name="Georgii-Hemming P."/>
            <person name="Gingeras T.R."/>
            <person name="Gojobori T."/>
            <person name="Green R.E."/>
            <person name="Gustincich S."/>
            <person name="Harbers M."/>
            <person name="Hayashi Y."/>
            <person name="Hensch T.K."/>
            <person name="Hirokawa N."/>
            <person name="Hill D."/>
            <person name="Huminiecki L."/>
            <person name="Iacono M."/>
            <person name="Ikeo K."/>
            <person name="Iwama A."/>
            <person name="Ishikawa T."/>
            <person name="Jakt M."/>
            <person name="Kanapin A."/>
            <person name="Katoh M."/>
            <person name="Kawasawa Y."/>
            <person name="Kelso J."/>
            <person name="Kitamura H."/>
            <person name="Kitano H."/>
            <person name="Kollias G."/>
            <person name="Krishnan S.P."/>
            <person name="Kruger A."/>
            <person name="Kummerfeld S.K."/>
            <person name="Kurochkin I.V."/>
            <person name="Lareau L.F."/>
            <person name="Lazarevic D."/>
            <person name="Lipovich L."/>
            <person name="Liu J."/>
            <person name="Liuni S."/>
            <person name="McWilliam S."/>
            <person name="Madan Babu M."/>
            <person name="Madera M."/>
            <person name="Marchionni L."/>
            <person name="Matsuda H."/>
            <person name="Matsuzawa S."/>
            <person name="Miki H."/>
            <person name="Mignone F."/>
            <person name="Miyake S."/>
            <person name="Morris K."/>
            <person name="Mottagui-Tabar S."/>
            <person name="Mulder N."/>
            <person name="Nakano N."/>
            <person name="Nakauchi H."/>
            <person name="Ng P."/>
            <person name="Nilsson R."/>
            <person name="Nishiguchi S."/>
            <person name="Nishikawa S."/>
            <person name="Nori F."/>
            <person name="Ohara O."/>
            <person name="Okazaki Y."/>
            <person name="Orlando V."/>
            <person name="Pang K.C."/>
            <person name="Pavan W.J."/>
            <person name="Pavesi G."/>
            <person name="Pesole G."/>
            <person name="Petrovsky N."/>
            <person name="Piazza S."/>
            <person name="Reed J."/>
            <person name="Reid J.F."/>
            <person name="Ring B.Z."/>
            <person name="Ringwald M."/>
            <person name="Rost B."/>
            <person name="Ruan Y."/>
            <person name="Salzberg S.L."/>
            <person name="Sandelin A."/>
            <person name="Schneider C."/>
            <person name="Schoenbach C."/>
            <person name="Sekiguchi K."/>
            <person name="Semple C.A."/>
            <person name="Seno S."/>
            <person name="Sessa L."/>
            <person name="Sheng Y."/>
            <person name="Shibata Y."/>
            <person name="Shimada H."/>
            <person name="Shimada K."/>
            <person name="Silva D."/>
            <person name="Sinclair B."/>
            <person name="Sperling S."/>
            <person name="Stupka E."/>
            <person name="Sugiura K."/>
            <person name="Sultana R."/>
            <person name="Takenaka Y."/>
            <person name="Taki K."/>
            <person name="Tammoja K."/>
            <person name="Tan S.L."/>
            <person name="Tang S."/>
            <person name="Taylor M.S."/>
            <person name="Tegner J."/>
            <person name="Teichmann S.A."/>
            <person name="Ueda H.R."/>
            <person name="van Nimwegen E."/>
            <person name="Verardo R."/>
            <person name="Wei C.L."/>
            <person name="Yagi K."/>
            <person name="Yamanishi H."/>
            <person name="Zabarovsky E."/>
            <person name="Zhu S."/>
            <person name="Zimmer A."/>
            <person name="Hide W."/>
            <person name="Bult C."/>
            <person name="Grimmond S.M."/>
            <person name="Teasdale R.D."/>
            <person name="Liu E.T."/>
            <person name="Brusic V."/>
            <person name="Quackenbush J."/>
            <person name="Wahlestedt C."/>
            <person name="Mattick J.S."/>
            <person name="Hume D.A."/>
            <person name="Kai C."/>
            <person name="Sasaki D."/>
            <person name="Tomaru Y."/>
            <person name="Fukuda S."/>
            <person name="Kanamori-Katayama M."/>
            <person name="Suzuki M."/>
            <person name="Aoki J."/>
            <person name="Arakawa T."/>
            <person name="Iida J."/>
            <person name="Imamura K."/>
            <person name="Itoh M."/>
            <person name="Kato T."/>
            <person name="Kawaji H."/>
            <person name="Kawagashira N."/>
            <person name="Kawashima T."/>
            <person name="Kojima M."/>
            <person name="Kondo S."/>
            <person name="Konno H."/>
            <person name="Nakano K."/>
            <person name="Ninomiya N."/>
            <person name="Nishio T."/>
            <person name="Okada M."/>
            <person name="Plessy C."/>
            <person name="Shibata K."/>
            <person name="Shiraki T."/>
            <person name="Suzuki S."/>
            <person name="Tagami M."/>
            <person name="Waki K."/>
            <person name="Watahiki A."/>
            <person name="Okamura-Oho Y."/>
            <person name="Suzuki H."/>
            <person name="Kawai J."/>
            <person name="Hayashizaki Y."/>
        </authorList>
    </citation>
    <scope>NUCLEOTIDE SEQUENCE [LARGE SCALE MRNA] (ISOFORM 3)</scope>
    <scope>NUCLEOTIDE SEQUENCE [LARGE SCALE MRNA] OF 1-707 (ISOFORM 1)</scope>
    <scope>NUCLEOTIDE SEQUENCE [LARGE SCALE MRNA] OF 1-618 (ISOFORM 2)</scope>
    <source>
        <strain>C57BL/6J</strain>
        <tissue>Cerebellum</tissue>
        <tissue>Embryo</tissue>
        <tissue>Thymus</tissue>
    </source>
</reference>
<reference key="2">
    <citation type="journal article" date="2009" name="PLoS Biol.">
        <title>Lineage-specific biology revealed by a finished genome assembly of the mouse.</title>
        <authorList>
            <person name="Church D.M."/>
            <person name="Goodstadt L."/>
            <person name="Hillier L.W."/>
            <person name="Zody M.C."/>
            <person name="Goldstein S."/>
            <person name="She X."/>
            <person name="Bult C.J."/>
            <person name="Agarwala R."/>
            <person name="Cherry J.L."/>
            <person name="DiCuccio M."/>
            <person name="Hlavina W."/>
            <person name="Kapustin Y."/>
            <person name="Meric P."/>
            <person name="Maglott D."/>
            <person name="Birtle Z."/>
            <person name="Marques A.C."/>
            <person name="Graves T."/>
            <person name="Zhou S."/>
            <person name="Teague B."/>
            <person name="Potamousis K."/>
            <person name="Churas C."/>
            <person name="Place M."/>
            <person name="Herschleb J."/>
            <person name="Runnheim R."/>
            <person name="Forrest D."/>
            <person name="Amos-Landgraf J."/>
            <person name="Schwartz D.C."/>
            <person name="Cheng Z."/>
            <person name="Lindblad-Toh K."/>
            <person name="Eichler E.E."/>
            <person name="Ponting C.P."/>
        </authorList>
    </citation>
    <scope>NUCLEOTIDE SEQUENCE [LARGE SCALE GENOMIC DNA]</scope>
    <source>
        <strain>C57BL/6J</strain>
    </source>
</reference>
<reference key="3">
    <citation type="journal article" date="2004" name="Genome Res.">
        <title>The status, quality, and expansion of the NIH full-length cDNA project: the Mammalian Gene Collection (MGC).</title>
        <authorList>
            <consortium name="The MGC Project Team"/>
        </authorList>
    </citation>
    <scope>NUCLEOTIDE SEQUENCE [LARGE SCALE MRNA] (ISOFORM 4)</scope>
    <source>
        <strain>C57BL/6J</strain>
        <tissue>Thymus</tissue>
    </source>
</reference>
<reference key="4">
    <citation type="journal article" date="2023" name="J. Cell Biol.">
        <title>CCDC15 localizes to the centriole inner scaffold and controls centriole length and integrity.</title>
        <authorList>
            <person name="Arslanhan M.D."/>
            <person name="Cengiz-Emek S."/>
            <person name="Odabasi E."/>
            <person name="Steib E."/>
            <person name="Hamel V."/>
            <person name="Guichard P."/>
            <person name="Firat-Karalar E.N."/>
        </authorList>
    </citation>
    <scope>SUBCELLULAR LOCATION</scope>
</reference>
<evidence type="ECO:0000250" key="1">
    <source>
        <dbReference type="UniProtKB" id="Q0P6D6"/>
    </source>
</evidence>
<evidence type="ECO:0000255" key="2"/>
<evidence type="ECO:0000269" key="3">
    <source>
    </source>
</evidence>
<evidence type="ECO:0000303" key="4">
    <source>
    </source>
</evidence>
<evidence type="ECO:0000303" key="5">
    <source>
    </source>
</evidence>
<dbReference type="EMBL" id="AK035850">
    <property type="protein sequence ID" value="BAC29211.1"/>
    <property type="molecule type" value="mRNA"/>
</dbReference>
<dbReference type="EMBL" id="AK041803">
    <property type="protein sequence ID" value="BAC31071.1"/>
    <property type="molecule type" value="mRNA"/>
</dbReference>
<dbReference type="EMBL" id="AK045055">
    <property type="protein sequence ID" value="BAC32199.1"/>
    <property type="molecule type" value="mRNA"/>
</dbReference>
<dbReference type="EMBL" id="AK051119">
    <property type="protein sequence ID" value="BAC34530.1"/>
    <property type="molecule type" value="mRNA"/>
</dbReference>
<dbReference type="EMBL" id="AC138284">
    <property type="status" value="NOT_ANNOTATED_CDS"/>
    <property type="molecule type" value="Genomic_DNA"/>
</dbReference>
<dbReference type="EMBL" id="BC032924">
    <property type="status" value="NOT_ANNOTATED_CDS"/>
    <property type="molecule type" value="mRNA"/>
</dbReference>
<dbReference type="CCDS" id="CCDS40584.2">
    <molecule id="Q8C9M2-1"/>
</dbReference>
<dbReference type="RefSeq" id="NP_001074898.2">
    <molecule id="Q8C9M2-1"/>
    <property type="nucleotide sequence ID" value="NM_001081429.2"/>
</dbReference>
<dbReference type="RefSeq" id="XP_006510404.1">
    <molecule id="Q8C9M2-1"/>
    <property type="nucleotide sequence ID" value="XM_006510341.5"/>
</dbReference>
<dbReference type="SMR" id="Q8C9M2"/>
<dbReference type="BioGRID" id="232850">
    <property type="interactions" value="13"/>
</dbReference>
<dbReference type="FunCoup" id="Q8C9M2">
    <property type="interactions" value="659"/>
</dbReference>
<dbReference type="IntAct" id="Q8C9M2">
    <property type="interactions" value="15"/>
</dbReference>
<dbReference type="STRING" id="10090.ENSMUSP00000036784"/>
<dbReference type="iPTMnet" id="Q8C9M2"/>
<dbReference type="PhosphoSitePlus" id="Q8C9M2"/>
<dbReference type="PaxDb" id="10090-ENSMUSP00000036784"/>
<dbReference type="ProteomicsDB" id="281493">
    <molecule id="Q8C9M2-1"/>
</dbReference>
<dbReference type="ProteomicsDB" id="281494">
    <molecule id="Q8C9M2-2"/>
</dbReference>
<dbReference type="ProteomicsDB" id="281495">
    <molecule id="Q8C9M2-3"/>
</dbReference>
<dbReference type="ProteomicsDB" id="281496">
    <molecule id="Q8C9M2-4"/>
</dbReference>
<dbReference type="Antibodypedia" id="50022">
    <property type="antibodies" value="71 antibodies from 15 providers"/>
</dbReference>
<dbReference type="Ensembl" id="ENSMUST00000037275.6">
    <molecule id="Q8C9M2-2"/>
    <property type="protein sequence ID" value="ENSMUSP00000036784.6"/>
    <property type="gene ID" value="ENSMUSG00000034303.9"/>
</dbReference>
<dbReference type="Ensembl" id="ENSMUST00000213633.2">
    <molecule id="Q8C9M2-1"/>
    <property type="protein sequence ID" value="ENSMUSP00000150207.2"/>
    <property type="gene ID" value="ENSMUSG00000034303.9"/>
</dbReference>
<dbReference type="Ensembl" id="ENSMUST00000216042.2">
    <molecule id="Q8C9M2-4"/>
    <property type="protein sequence ID" value="ENSMUSP00000150095.2"/>
    <property type="gene ID" value="ENSMUSG00000034303.9"/>
</dbReference>
<dbReference type="Ensembl" id="ENSMUST00000217238.3">
    <molecule id="Q8C9M2-4"/>
    <property type="protein sequence ID" value="ENSMUSP00000149429.3"/>
    <property type="gene ID" value="ENSMUSG00000034303.9"/>
</dbReference>
<dbReference type="Ensembl" id="ENSMUST00000239439.2">
    <molecule id="Q8C9M2-1"/>
    <property type="protein sequence ID" value="ENSMUSP00000159312.2"/>
    <property type="gene ID" value="ENSMUSG00000034303.9"/>
</dbReference>
<dbReference type="GeneID" id="245902"/>
<dbReference type="KEGG" id="mmu:245902"/>
<dbReference type="UCSC" id="uc009oum.1">
    <molecule id="Q8C9M2-2"/>
    <property type="organism name" value="mouse"/>
</dbReference>
<dbReference type="UCSC" id="uc009oun.1">
    <molecule id="Q8C9M2-1"/>
    <property type="organism name" value="mouse"/>
</dbReference>
<dbReference type="UCSC" id="uc009oup.1">
    <molecule id="Q8C9M2-4"/>
    <property type="organism name" value="mouse"/>
</dbReference>
<dbReference type="AGR" id="MGI:2444488"/>
<dbReference type="CTD" id="80071"/>
<dbReference type="MGI" id="MGI:2444488">
    <property type="gene designation" value="Ccdc15"/>
</dbReference>
<dbReference type="VEuPathDB" id="HostDB:ENSMUSG00000034303"/>
<dbReference type="eggNOG" id="ENOG502QU35">
    <property type="taxonomic scope" value="Eukaryota"/>
</dbReference>
<dbReference type="GeneTree" id="ENSGT00500000044966"/>
<dbReference type="HOGENOM" id="CLU_018471_0_0_1"/>
<dbReference type="InParanoid" id="Q8C9M2"/>
<dbReference type="OMA" id="EAQDYFP"/>
<dbReference type="PhylomeDB" id="Q8C9M2"/>
<dbReference type="TreeFam" id="TF329047"/>
<dbReference type="BioGRID-ORCS" id="245902">
    <property type="hits" value="4 hits in 76 CRISPR screens"/>
</dbReference>
<dbReference type="ChiTaRS" id="Ccdc15">
    <property type="organism name" value="mouse"/>
</dbReference>
<dbReference type="PRO" id="PR:Q8C9M2"/>
<dbReference type="Proteomes" id="UP000000589">
    <property type="component" value="Chromosome 9"/>
</dbReference>
<dbReference type="RNAct" id="Q8C9M2">
    <property type="molecule type" value="protein"/>
</dbReference>
<dbReference type="Bgee" id="ENSMUSG00000034303">
    <property type="expression patterns" value="Expressed in animal zygote and 66 other cell types or tissues"/>
</dbReference>
<dbReference type="ExpressionAtlas" id="Q8C9M2">
    <property type="expression patterns" value="baseline and differential"/>
</dbReference>
<dbReference type="GO" id="GO:0034451">
    <property type="term" value="C:centriolar satellite"/>
    <property type="evidence" value="ECO:0007669"/>
    <property type="project" value="UniProtKB-SubCell"/>
</dbReference>
<dbReference type="GO" id="GO:0005814">
    <property type="term" value="C:centriole"/>
    <property type="evidence" value="ECO:0000250"/>
    <property type="project" value="UniProtKB"/>
</dbReference>
<dbReference type="GO" id="GO:0005813">
    <property type="term" value="C:centrosome"/>
    <property type="evidence" value="ECO:0000250"/>
    <property type="project" value="UniProtKB"/>
</dbReference>
<dbReference type="GO" id="GO:0005737">
    <property type="term" value="C:cytoplasm"/>
    <property type="evidence" value="ECO:0007669"/>
    <property type="project" value="UniProtKB-KW"/>
</dbReference>
<dbReference type="GO" id="GO:0060271">
    <property type="term" value="P:cilium assembly"/>
    <property type="evidence" value="ECO:0000250"/>
    <property type="project" value="UniProtKB"/>
</dbReference>
<dbReference type="GO" id="GO:1903724">
    <property type="term" value="P:positive regulation of centriole elongation"/>
    <property type="evidence" value="ECO:0000250"/>
    <property type="project" value="UniProtKB"/>
</dbReference>
<dbReference type="InterPro" id="IPR037693">
    <property type="entry name" value="CCDC15"/>
</dbReference>
<dbReference type="PANTHER" id="PTHR14817">
    <property type="entry name" value="COILED-COIL DOMAIN-CONTAINING PROTEIN 15"/>
    <property type="match status" value="1"/>
</dbReference>
<dbReference type="PANTHER" id="PTHR14817:SF2">
    <property type="entry name" value="COILED-COIL DOMAIN-CONTAINING PROTEIN 15"/>
    <property type="match status" value="1"/>
</dbReference>
<gene>
    <name type="primary">Ccdc15</name>
</gene>
<accession>Q8C9M2</accession>
<accession>Q8BQB1</accession>
<accession>Q8BRD7</accession>
<accession>Q8CBK5</accession>
<name>CCD15_MOUSE</name>
<proteinExistence type="evidence at transcript level"/>